<comment type="function">
    <text evidence="1">This protein is involved in the repair of mismatches in DNA. It is required for dam-dependent methyl-directed DNA mismatch repair. May act as a 'molecular matchmaker', a protein that promotes the formation of a stable complex between two or more DNA-binding proteins in an ATP-dependent manner without itself being part of a final effector complex.</text>
</comment>
<comment type="similarity">
    <text evidence="1">Belongs to the DNA mismatch repair MutL/HexB family.</text>
</comment>
<proteinExistence type="inferred from homology"/>
<sequence length="650" mass="71197">MATKIRILPENLTNKIAAGEVVERPASVAKELVENALDAGSKEVVVEIESGGRRLIKVSDTGCGMSRDDALLALERHATSKIATDEDLFSLCTLGFRGEALPSVASVSRLTISTRTSDSVEGTEIYAEGGRIKEVKECGMAVGTVISVRNLFFNTPARLKFMKSAETEGGHVGELLTRLAISRPEVRFTYKNDGKVMFRALDADLKERVATMLGRSISSFLYPVSYQEGGLKVSGLVAAPECSRSAGSHLYTYINGRFIKDKVVQHAILQAYRNFLERGRYPVVAVFIDIAPGEVDVNVHPTKHEVRFREQGRVHDAIQKAVESVLKETPWLKRSAVAAASRPAEKGGGALRPFSSMEASQAALPVTPQPRPALTPGHPDPPPQAQLQQPLVSESRVAEVRELLVNFQPRPQPPLRPQYRGSVAPREGSPYAPIAAAPVPASEPQSAAQDSDHVAAGYFSSLGVIGQFNASYILCQRGTDLILIDQHAAHERVAFEKLKGQFAGREVDSQGLLFPETMEFSFRESAVLREHQAELARLGFEFEEFGGNTWLLKGVPQVLSATRYVDTIRDILEELGSLSRSRAFSDIQEDLLARIACHSVVRGKRTLSPVEIAALFKQMDETDFSSNCPHGRPVMQTLTLAEVEKMFKRI</sequence>
<name>MUTL_GEOSM</name>
<protein>
    <recommendedName>
        <fullName evidence="1">DNA mismatch repair protein MutL</fullName>
    </recommendedName>
</protein>
<dbReference type="EMBL" id="CP001661">
    <property type="protein sequence ID" value="ACT19308.1"/>
    <property type="molecule type" value="Genomic_DNA"/>
</dbReference>
<dbReference type="SMR" id="C6E4L2"/>
<dbReference type="STRING" id="443144.GM21_3282"/>
<dbReference type="KEGG" id="gem:GM21_3282"/>
<dbReference type="eggNOG" id="COG0323">
    <property type="taxonomic scope" value="Bacteria"/>
</dbReference>
<dbReference type="HOGENOM" id="CLU_004131_4_2_7"/>
<dbReference type="OrthoDB" id="9763467at2"/>
<dbReference type="GO" id="GO:0032300">
    <property type="term" value="C:mismatch repair complex"/>
    <property type="evidence" value="ECO:0007669"/>
    <property type="project" value="InterPro"/>
</dbReference>
<dbReference type="GO" id="GO:0005524">
    <property type="term" value="F:ATP binding"/>
    <property type="evidence" value="ECO:0007669"/>
    <property type="project" value="InterPro"/>
</dbReference>
<dbReference type="GO" id="GO:0016887">
    <property type="term" value="F:ATP hydrolysis activity"/>
    <property type="evidence" value="ECO:0007669"/>
    <property type="project" value="InterPro"/>
</dbReference>
<dbReference type="GO" id="GO:0140664">
    <property type="term" value="F:ATP-dependent DNA damage sensor activity"/>
    <property type="evidence" value="ECO:0007669"/>
    <property type="project" value="InterPro"/>
</dbReference>
<dbReference type="GO" id="GO:0030983">
    <property type="term" value="F:mismatched DNA binding"/>
    <property type="evidence" value="ECO:0007669"/>
    <property type="project" value="InterPro"/>
</dbReference>
<dbReference type="GO" id="GO:0006298">
    <property type="term" value="P:mismatch repair"/>
    <property type="evidence" value="ECO:0007669"/>
    <property type="project" value="UniProtKB-UniRule"/>
</dbReference>
<dbReference type="CDD" id="cd16926">
    <property type="entry name" value="HATPase_MutL-MLH-PMS-like"/>
    <property type="match status" value="1"/>
</dbReference>
<dbReference type="CDD" id="cd00782">
    <property type="entry name" value="MutL_Trans"/>
    <property type="match status" value="1"/>
</dbReference>
<dbReference type="FunFam" id="3.30.565.10:FF:000003">
    <property type="entry name" value="DNA mismatch repair endonuclease MutL"/>
    <property type="match status" value="1"/>
</dbReference>
<dbReference type="Gene3D" id="3.30.230.10">
    <property type="match status" value="1"/>
</dbReference>
<dbReference type="Gene3D" id="3.30.565.10">
    <property type="entry name" value="Histidine kinase-like ATPase, C-terminal domain"/>
    <property type="match status" value="1"/>
</dbReference>
<dbReference type="Gene3D" id="3.30.1540.20">
    <property type="entry name" value="MutL, C-terminal domain, dimerisation subdomain"/>
    <property type="match status" value="1"/>
</dbReference>
<dbReference type="Gene3D" id="3.30.1370.100">
    <property type="entry name" value="MutL, C-terminal domain, regulatory subdomain"/>
    <property type="match status" value="1"/>
</dbReference>
<dbReference type="HAMAP" id="MF_00149">
    <property type="entry name" value="DNA_mis_repair"/>
    <property type="match status" value="1"/>
</dbReference>
<dbReference type="InterPro" id="IPR014762">
    <property type="entry name" value="DNA_mismatch_repair_CS"/>
</dbReference>
<dbReference type="InterPro" id="IPR020667">
    <property type="entry name" value="DNA_mismatch_repair_MutL"/>
</dbReference>
<dbReference type="InterPro" id="IPR013507">
    <property type="entry name" value="DNA_mismatch_S5_2-like"/>
</dbReference>
<dbReference type="InterPro" id="IPR036890">
    <property type="entry name" value="HATPase_C_sf"/>
</dbReference>
<dbReference type="InterPro" id="IPR002099">
    <property type="entry name" value="MutL/Mlh/PMS"/>
</dbReference>
<dbReference type="InterPro" id="IPR038973">
    <property type="entry name" value="MutL/Mlh/Pms-like"/>
</dbReference>
<dbReference type="InterPro" id="IPR014790">
    <property type="entry name" value="MutL_C"/>
</dbReference>
<dbReference type="InterPro" id="IPR042120">
    <property type="entry name" value="MutL_C_dimsub"/>
</dbReference>
<dbReference type="InterPro" id="IPR042121">
    <property type="entry name" value="MutL_C_regsub"/>
</dbReference>
<dbReference type="InterPro" id="IPR037198">
    <property type="entry name" value="MutL_C_sf"/>
</dbReference>
<dbReference type="InterPro" id="IPR020568">
    <property type="entry name" value="Ribosomal_Su5_D2-typ_SF"/>
</dbReference>
<dbReference type="InterPro" id="IPR014721">
    <property type="entry name" value="Ribsml_uS5_D2-typ_fold_subgr"/>
</dbReference>
<dbReference type="NCBIfam" id="TIGR00585">
    <property type="entry name" value="mutl"/>
    <property type="match status" value="1"/>
</dbReference>
<dbReference type="PANTHER" id="PTHR10073">
    <property type="entry name" value="DNA MISMATCH REPAIR PROTEIN MLH, PMS, MUTL"/>
    <property type="match status" value="1"/>
</dbReference>
<dbReference type="PANTHER" id="PTHR10073:SF12">
    <property type="entry name" value="DNA MISMATCH REPAIR PROTEIN MLH1"/>
    <property type="match status" value="1"/>
</dbReference>
<dbReference type="Pfam" id="PF01119">
    <property type="entry name" value="DNA_mis_repair"/>
    <property type="match status" value="1"/>
</dbReference>
<dbReference type="Pfam" id="PF13589">
    <property type="entry name" value="HATPase_c_3"/>
    <property type="match status" value="1"/>
</dbReference>
<dbReference type="Pfam" id="PF08676">
    <property type="entry name" value="MutL_C"/>
    <property type="match status" value="1"/>
</dbReference>
<dbReference type="SMART" id="SM01340">
    <property type="entry name" value="DNA_mis_repair"/>
    <property type="match status" value="1"/>
</dbReference>
<dbReference type="SMART" id="SM00853">
    <property type="entry name" value="MutL_C"/>
    <property type="match status" value="1"/>
</dbReference>
<dbReference type="SUPFAM" id="SSF55874">
    <property type="entry name" value="ATPase domain of HSP90 chaperone/DNA topoisomerase II/histidine kinase"/>
    <property type="match status" value="1"/>
</dbReference>
<dbReference type="SUPFAM" id="SSF118116">
    <property type="entry name" value="DNA mismatch repair protein MutL"/>
    <property type="match status" value="1"/>
</dbReference>
<dbReference type="SUPFAM" id="SSF54211">
    <property type="entry name" value="Ribosomal protein S5 domain 2-like"/>
    <property type="match status" value="1"/>
</dbReference>
<dbReference type="PROSITE" id="PS00058">
    <property type="entry name" value="DNA_MISMATCH_REPAIR_1"/>
    <property type="match status" value="1"/>
</dbReference>
<evidence type="ECO:0000255" key="1">
    <source>
        <dbReference type="HAMAP-Rule" id="MF_00149"/>
    </source>
</evidence>
<evidence type="ECO:0000256" key="2">
    <source>
        <dbReference type="SAM" id="MobiDB-lite"/>
    </source>
</evidence>
<gene>
    <name evidence="1" type="primary">mutL</name>
    <name type="ordered locus">GM21_3282</name>
</gene>
<organism>
    <name type="scientific">Geobacter sp. (strain M21)</name>
    <dbReference type="NCBI Taxonomy" id="443144"/>
    <lineage>
        <taxon>Bacteria</taxon>
        <taxon>Pseudomonadati</taxon>
        <taxon>Thermodesulfobacteriota</taxon>
        <taxon>Desulfuromonadia</taxon>
        <taxon>Geobacterales</taxon>
        <taxon>Geobacteraceae</taxon>
        <taxon>Geobacter</taxon>
    </lineage>
</organism>
<feature type="chain" id="PRO_1000203389" description="DNA mismatch repair protein MutL">
    <location>
        <begin position="1"/>
        <end position="650"/>
    </location>
</feature>
<feature type="region of interest" description="Disordered" evidence="2">
    <location>
        <begin position="358"/>
        <end position="392"/>
    </location>
</feature>
<feature type="region of interest" description="Disordered" evidence="2">
    <location>
        <begin position="408"/>
        <end position="448"/>
    </location>
</feature>
<feature type="compositionally biased region" description="Pro residues" evidence="2">
    <location>
        <begin position="367"/>
        <end position="384"/>
    </location>
</feature>
<feature type="compositionally biased region" description="Low complexity" evidence="2">
    <location>
        <begin position="430"/>
        <end position="444"/>
    </location>
</feature>
<reference key="1">
    <citation type="submission" date="2009-07" db="EMBL/GenBank/DDBJ databases">
        <title>Complete sequence of Geobacter sp. M21.</title>
        <authorList>
            <consortium name="US DOE Joint Genome Institute"/>
            <person name="Lucas S."/>
            <person name="Copeland A."/>
            <person name="Lapidus A."/>
            <person name="Glavina del Rio T."/>
            <person name="Dalin E."/>
            <person name="Tice H."/>
            <person name="Bruce D."/>
            <person name="Goodwin L."/>
            <person name="Pitluck S."/>
            <person name="Saunders E."/>
            <person name="Brettin T."/>
            <person name="Detter J.C."/>
            <person name="Han C."/>
            <person name="Larimer F."/>
            <person name="Land M."/>
            <person name="Hauser L."/>
            <person name="Kyrpides N."/>
            <person name="Ovchinnikova G."/>
            <person name="Lovley D."/>
        </authorList>
    </citation>
    <scope>NUCLEOTIDE SEQUENCE [LARGE SCALE GENOMIC DNA]</scope>
    <source>
        <strain>M21</strain>
    </source>
</reference>
<accession>C6E4L2</accession>
<keyword id="KW-0227">DNA damage</keyword>
<keyword id="KW-0234">DNA repair</keyword>